<sequence>MIRGSIVALVTPMRADGSVDWERLRSLVNWHVEQGTHAIVAVGTTGESATLGFEEHDSVIREVVALAKGRLPVIAGTGANNTEEAIRLTRDAKRDGADACLLVTPYYNKPPQEGLYQHFLAIARAVDIPQILYNVPGRTSCDLLPETVERLSKVPNIVGIKEATGNLERAREIRERCSDDFMLYSGDDATAMDFILAGGHGDISVTANVAPAKMAAMCEAALAGDADTARALNAELEPLHRDLFIEANPIPVKWALFEMGLIDAGIRLPLVPMSEAAQPRLRETMRQCGLLEVK</sequence>
<comment type="function">
    <text evidence="1">Catalyzes the condensation of (S)-aspartate-beta-semialdehyde [(S)-ASA] and pyruvate to 4-hydroxy-tetrahydrodipicolinate (HTPA).</text>
</comment>
<comment type="catalytic activity">
    <reaction evidence="1">
        <text>L-aspartate 4-semialdehyde + pyruvate = (2S,4S)-4-hydroxy-2,3,4,5-tetrahydrodipicolinate + H2O + H(+)</text>
        <dbReference type="Rhea" id="RHEA:34171"/>
        <dbReference type="ChEBI" id="CHEBI:15361"/>
        <dbReference type="ChEBI" id="CHEBI:15377"/>
        <dbReference type="ChEBI" id="CHEBI:15378"/>
        <dbReference type="ChEBI" id="CHEBI:67139"/>
        <dbReference type="ChEBI" id="CHEBI:537519"/>
        <dbReference type="EC" id="4.3.3.7"/>
    </reaction>
</comment>
<comment type="pathway">
    <text evidence="1">Amino-acid biosynthesis; L-lysine biosynthesis via DAP pathway; (S)-tetrahydrodipicolinate from L-aspartate: step 3/4.</text>
</comment>
<comment type="subunit">
    <text evidence="1">Homotetramer; dimer of dimers.</text>
</comment>
<comment type="subcellular location">
    <subcellularLocation>
        <location evidence="1">Cytoplasm</location>
    </subcellularLocation>
</comment>
<comment type="similarity">
    <text evidence="1">Belongs to the DapA family.</text>
</comment>
<comment type="caution">
    <text evidence="2">Was originally thought to be a dihydrodipicolinate synthase (DHDPS), catalyzing the condensation of (S)-aspartate-beta-semialdehyde [(S)-ASA] and pyruvate to dihydrodipicolinate (DHDP). However, it was shown in E.coli that the product of the enzymatic reaction is not dihydrodipicolinate but in fact (4S)-4-hydroxy-2,3,4,5-tetrahydro-(2S)-dipicolinic acid (HTPA), and that the consecutive dehydration reaction leading to DHDP is not spontaneous but catalyzed by DapB.</text>
</comment>
<name>DAPA_ALCBS</name>
<dbReference type="EC" id="4.3.3.7" evidence="1"/>
<dbReference type="EMBL" id="AM286690">
    <property type="protein sequence ID" value="CAL16224.1"/>
    <property type="molecule type" value="Genomic_DNA"/>
</dbReference>
<dbReference type="RefSeq" id="WP_011588060.1">
    <property type="nucleotide sequence ID" value="NC_008260.1"/>
</dbReference>
<dbReference type="SMR" id="Q0VRH4"/>
<dbReference type="STRING" id="393595.ABO_0776"/>
<dbReference type="KEGG" id="abo:ABO_0776"/>
<dbReference type="eggNOG" id="COG0329">
    <property type="taxonomic scope" value="Bacteria"/>
</dbReference>
<dbReference type="HOGENOM" id="CLU_049343_7_1_6"/>
<dbReference type="OrthoDB" id="9782828at2"/>
<dbReference type="UniPathway" id="UPA00034">
    <property type="reaction ID" value="UER00017"/>
</dbReference>
<dbReference type="Proteomes" id="UP000008871">
    <property type="component" value="Chromosome"/>
</dbReference>
<dbReference type="GO" id="GO:0005829">
    <property type="term" value="C:cytosol"/>
    <property type="evidence" value="ECO:0007669"/>
    <property type="project" value="TreeGrafter"/>
</dbReference>
<dbReference type="GO" id="GO:0008840">
    <property type="term" value="F:4-hydroxy-tetrahydrodipicolinate synthase activity"/>
    <property type="evidence" value="ECO:0007669"/>
    <property type="project" value="UniProtKB-UniRule"/>
</dbReference>
<dbReference type="GO" id="GO:0019877">
    <property type="term" value="P:diaminopimelate biosynthetic process"/>
    <property type="evidence" value="ECO:0007669"/>
    <property type="project" value="UniProtKB-UniRule"/>
</dbReference>
<dbReference type="GO" id="GO:0009089">
    <property type="term" value="P:lysine biosynthetic process via diaminopimelate"/>
    <property type="evidence" value="ECO:0007669"/>
    <property type="project" value="UniProtKB-UniRule"/>
</dbReference>
<dbReference type="CDD" id="cd00950">
    <property type="entry name" value="DHDPS"/>
    <property type="match status" value="1"/>
</dbReference>
<dbReference type="Gene3D" id="3.20.20.70">
    <property type="entry name" value="Aldolase class I"/>
    <property type="match status" value="1"/>
</dbReference>
<dbReference type="HAMAP" id="MF_00418">
    <property type="entry name" value="DapA"/>
    <property type="match status" value="1"/>
</dbReference>
<dbReference type="InterPro" id="IPR013785">
    <property type="entry name" value="Aldolase_TIM"/>
</dbReference>
<dbReference type="InterPro" id="IPR005263">
    <property type="entry name" value="DapA"/>
</dbReference>
<dbReference type="InterPro" id="IPR002220">
    <property type="entry name" value="DapA-like"/>
</dbReference>
<dbReference type="InterPro" id="IPR020625">
    <property type="entry name" value="Schiff_base-form_aldolases_AS"/>
</dbReference>
<dbReference type="InterPro" id="IPR020624">
    <property type="entry name" value="Schiff_base-form_aldolases_CS"/>
</dbReference>
<dbReference type="NCBIfam" id="TIGR00674">
    <property type="entry name" value="dapA"/>
    <property type="match status" value="1"/>
</dbReference>
<dbReference type="PANTHER" id="PTHR12128:SF66">
    <property type="entry name" value="4-HYDROXY-2-OXOGLUTARATE ALDOLASE, MITOCHONDRIAL"/>
    <property type="match status" value="1"/>
</dbReference>
<dbReference type="PANTHER" id="PTHR12128">
    <property type="entry name" value="DIHYDRODIPICOLINATE SYNTHASE"/>
    <property type="match status" value="1"/>
</dbReference>
<dbReference type="Pfam" id="PF00701">
    <property type="entry name" value="DHDPS"/>
    <property type="match status" value="1"/>
</dbReference>
<dbReference type="PIRSF" id="PIRSF001365">
    <property type="entry name" value="DHDPS"/>
    <property type="match status" value="1"/>
</dbReference>
<dbReference type="PRINTS" id="PR00146">
    <property type="entry name" value="DHPICSNTHASE"/>
</dbReference>
<dbReference type="SMART" id="SM01130">
    <property type="entry name" value="DHDPS"/>
    <property type="match status" value="1"/>
</dbReference>
<dbReference type="SUPFAM" id="SSF51569">
    <property type="entry name" value="Aldolase"/>
    <property type="match status" value="1"/>
</dbReference>
<dbReference type="PROSITE" id="PS00665">
    <property type="entry name" value="DHDPS_1"/>
    <property type="match status" value="1"/>
</dbReference>
<dbReference type="PROSITE" id="PS00666">
    <property type="entry name" value="DHDPS_2"/>
    <property type="match status" value="1"/>
</dbReference>
<evidence type="ECO:0000255" key="1">
    <source>
        <dbReference type="HAMAP-Rule" id="MF_00418"/>
    </source>
</evidence>
<evidence type="ECO:0000305" key="2"/>
<protein>
    <recommendedName>
        <fullName evidence="1">4-hydroxy-tetrahydrodipicolinate synthase</fullName>
        <shortName evidence="1">HTPA synthase</shortName>
        <ecNumber evidence="1">4.3.3.7</ecNumber>
    </recommendedName>
</protein>
<reference key="1">
    <citation type="journal article" date="2006" name="Nat. Biotechnol.">
        <title>Genome sequence of the ubiquitous hydrocarbon-degrading marine bacterium Alcanivorax borkumensis.</title>
        <authorList>
            <person name="Schneiker S."/>
            <person name="Martins dos Santos V.A.P."/>
            <person name="Bartels D."/>
            <person name="Bekel T."/>
            <person name="Brecht M."/>
            <person name="Buhrmester J."/>
            <person name="Chernikova T.N."/>
            <person name="Denaro R."/>
            <person name="Ferrer M."/>
            <person name="Gertler C."/>
            <person name="Goesmann A."/>
            <person name="Golyshina O.V."/>
            <person name="Kaminski F."/>
            <person name="Khachane A.N."/>
            <person name="Lang S."/>
            <person name="Linke B."/>
            <person name="McHardy A.C."/>
            <person name="Meyer F."/>
            <person name="Nechitaylo T."/>
            <person name="Puehler A."/>
            <person name="Regenhardt D."/>
            <person name="Rupp O."/>
            <person name="Sabirova J.S."/>
            <person name="Selbitschka W."/>
            <person name="Yakimov M.M."/>
            <person name="Timmis K.N."/>
            <person name="Vorhoelter F.-J."/>
            <person name="Weidner S."/>
            <person name="Kaiser O."/>
            <person name="Golyshin P.N."/>
        </authorList>
    </citation>
    <scope>NUCLEOTIDE SEQUENCE [LARGE SCALE GENOMIC DNA]</scope>
    <source>
        <strain>ATCC 700651 / DSM 11573 / NCIMB 13689 / SK2</strain>
    </source>
</reference>
<keyword id="KW-0028">Amino-acid biosynthesis</keyword>
<keyword id="KW-0963">Cytoplasm</keyword>
<keyword id="KW-0220">Diaminopimelate biosynthesis</keyword>
<keyword id="KW-0456">Lyase</keyword>
<keyword id="KW-0457">Lysine biosynthesis</keyword>
<keyword id="KW-1185">Reference proteome</keyword>
<keyword id="KW-0704">Schiff base</keyword>
<accession>Q0VRH4</accession>
<gene>
    <name evidence="1" type="primary">dapA</name>
    <name type="ordered locus">ABO_0776</name>
</gene>
<feature type="chain" id="PRO_1000050160" description="4-hydroxy-tetrahydrodipicolinate synthase">
    <location>
        <begin position="1"/>
        <end position="294"/>
    </location>
</feature>
<feature type="active site" description="Proton donor/acceptor" evidence="1">
    <location>
        <position position="133"/>
    </location>
</feature>
<feature type="active site" description="Schiff-base intermediate with substrate" evidence="1">
    <location>
        <position position="161"/>
    </location>
</feature>
<feature type="binding site" evidence="1">
    <location>
        <position position="45"/>
    </location>
    <ligand>
        <name>pyruvate</name>
        <dbReference type="ChEBI" id="CHEBI:15361"/>
    </ligand>
</feature>
<feature type="binding site" evidence="1">
    <location>
        <position position="203"/>
    </location>
    <ligand>
        <name>pyruvate</name>
        <dbReference type="ChEBI" id="CHEBI:15361"/>
    </ligand>
</feature>
<feature type="site" description="Part of a proton relay during catalysis" evidence="1">
    <location>
        <position position="44"/>
    </location>
</feature>
<feature type="site" description="Part of a proton relay during catalysis" evidence="1">
    <location>
        <position position="107"/>
    </location>
</feature>
<proteinExistence type="inferred from homology"/>
<organism>
    <name type="scientific">Alcanivorax borkumensis (strain ATCC 700651 / DSM 11573 / NCIMB 13689 / SK2)</name>
    <dbReference type="NCBI Taxonomy" id="393595"/>
    <lineage>
        <taxon>Bacteria</taxon>
        <taxon>Pseudomonadati</taxon>
        <taxon>Pseudomonadota</taxon>
        <taxon>Gammaproteobacteria</taxon>
        <taxon>Oceanospirillales</taxon>
        <taxon>Alcanivoracaceae</taxon>
        <taxon>Alcanivorax</taxon>
    </lineage>
</organism>